<organism>
    <name type="scientific">Aspergillus flavipes</name>
    <dbReference type="NCBI Taxonomy" id="41900"/>
    <lineage>
        <taxon>Eukaryota</taxon>
        <taxon>Fungi</taxon>
        <taxon>Dikarya</taxon>
        <taxon>Ascomycota</taxon>
        <taxon>Pezizomycotina</taxon>
        <taxon>Eurotiomycetes</taxon>
        <taxon>Eurotiomycetidae</taxon>
        <taxon>Eurotiales</taxon>
        <taxon>Aspergillaceae</taxon>
        <taxon>Aspergillus</taxon>
        <taxon>Aspergillus subgen. Circumdati</taxon>
    </lineage>
</organism>
<comment type="function">
    <text evidence="1 7 10">Hybrid PKS-NRPS synthetase; part of the gene cluster that mediates the biosynthesis of the cytotoxic leucine-containing cytochalasans, including aspochalasin C, aspochalasin E, TMC-169, flavichalasine F, aspergillin PZ, aspochalasin M and flavichalasine G (PubMed:32913332). The first step in the pathway is catalyzed by the hybrid PKS-NRPS ffsA that utilizes 8 units of malonyl-CoA to iteratively assemble the octaketide chain before addition of L-leucine by the C-terminal NRPS modules (PubMed:32913332). Because ffsA lacks a designated enoylreductase (ER) domain, the required activity is provided the enoyl reductase fssC (Probable). The methyltransferase (MT) domain of ffsA catalyzes the alpha-methylation at C10 and C14 using S-adenosyl-L-methionine as the methyl-donating cosubstrate (Probable). Reduction by the hydrolyase ffsE, followed by dehydration and intra-molecular Diels-Alder cyclization by the Diels-Alderase ffsF then yield the required isoindolone-fused macrocycle (By similarity). A number of oxidative steps catalyzed by the tailoring cytochrome P450 monooxygenase ffsD, the FAD-linked oxidoreductase ffsJ and the short-chain dehydrogenase/reductase ffsI, are further required to afford the final products (Probable).</text>
</comment>
<comment type="pathway">
    <text evidence="10">Mycotoxin biosynthesis.</text>
</comment>
<comment type="domain">
    <text evidence="10">NRP synthetases are composed of discrete domains (adenylation (A), thiolation (T) or peptidyl carrier protein (PCP) and condensation (C) domains) which when grouped together are referred to as a single module. Each module is responsible for the recognition (via the A domain) and incorporation of a single amino acid into the growing peptide product. Thus, an NRP synthetase is generally composed of one or more modules and can terminate in a thioesterase domain (TE) that releases the newly synthesized peptide from the enzyme. The ffsA A domain specifically recognizes L-leucine. FfsA also contains a polyketide synthase module (PKS) consisting of several catalytic domains including a ketoacyl synthase domain (KS), an acyl transferase domain (AT), a dehydratase domain (DH), a methyltransferase domain (MT), and a ketoreductase domain (KR). Instead of a thioesterase domain (TE), ffsA finishes with a reductase-like domain (R) for peptide release. FssA has the following architecture: KS-MAT-DH-MT-KR-PCP-C-A-T-R.</text>
</comment>
<comment type="disruption phenotype">
    <text evidence="7">Abolishes the production of leucine-containing cytochalasans.</text>
</comment>
<comment type="similarity">
    <text evidence="9">In the C-terminal section; belongs to the NRP synthetase family.</text>
</comment>
<keyword id="KW-0012">Acyltransferase</keyword>
<keyword id="KW-0413">Isomerase</keyword>
<keyword id="KW-0436">Ligase</keyword>
<keyword id="KW-0489">Methyltransferase</keyword>
<keyword id="KW-0511">Multifunctional enzyme</keyword>
<keyword id="KW-0521">NADP</keyword>
<keyword id="KW-0560">Oxidoreductase</keyword>
<keyword id="KW-0596">Phosphopantetheine</keyword>
<keyword id="KW-0597">Phosphoprotein</keyword>
<keyword id="KW-0677">Repeat</keyword>
<keyword id="KW-0949">S-adenosyl-L-methionine</keyword>
<keyword id="KW-0808">Transferase</keyword>
<reference key="1">
    <citation type="journal article" date="2020" name="J. Antibiot.">
        <title>Discovery and characterization of a cytochalasan biosynthetic cluster from the marine-derived fungus Aspergillus flavipes CNL-338.</title>
        <authorList>
            <person name="Heard S.C."/>
            <person name="Wu G."/>
            <person name="Winter J.M."/>
        </authorList>
    </citation>
    <scope>NUCLEOTIDE SEQUENCE [GENOMIC DNA]</scope>
    <scope>FUNCTION</scope>
    <scope>DISRUPTION PHENOTYPE</scope>
    <scope>PATHWAY</scope>
    <source>
        <strain>CNL-338</strain>
    </source>
</reference>
<evidence type="ECO:0000250" key="1">
    <source>
        <dbReference type="UniProtKB" id="Q0V6Q6"/>
    </source>
</evidence>
<evidence type="ECO:0000255" key="2"/>
<evidence type="ECO:0000255" key="3">
    <source>
        <dbReference type="PROSITE-ProRule" id="PRU00258"/>
    </source>
</evidence>
<evidence type="ECO:0000255" key="4">
    <source>
        <dbReference type="PROSITE-ProRule" id="PRU01348"/>
    </source>
</evidence>
<evidence type="ECO:0000255" key="5">
    <source>
        <dbReference type="PROSITE-ProRule" id="PRU01363"/>
    </source>
</evidence>
<evidence type="ECO:0000256" key="6">
    <source>
        <dbReference type="SAM" id="MobiDB-lite"/>
    </source>
</evidence>
<evidence type="ECO:0000269" key="7">
    <source>
    </source>
</evidence>
<evidence type="ECO:0000303" key="8">
    <source>
    </source>
</evidence>
<evidence type="ECO:0000305" key="9"/>
<evidence type="ECO:0000305" key="10">
    <source>
    </source>
</evidence>
<name>FFSA_ASPFV</name>
<gene>
    <name evidence="8" type="primary">ffsA</name>
</gene>
<sequence length="4042" mass="443936">MATTTAPTTQGHNQPSREPIAIVGSACRFPGGASSPSKLWKLLEHPRDVLKEIPPDRFSVDGFYHPDNMHHGTSNVRHSYILDDDIRVFDAQFFGIKPVEANSIDPQQRLLMETVYEGIESAGLQLNKMKGSQTGVYVGLMSNDYADMLGNDQESFPTYFATGTARSIVSNRVSYFFDWHGPSMTIDTACSSSLVAMHQAVQYLRSGDGSDVAIAAGTNILLNPDQYIAESKLKMLSPDGRSQMWDEKANGYARGDGIAVVVLKTLSQALRDGDHIECIVRETHINQDGKTKGITMPSATAQTALIRSTYKNAGLDITKPSDRPQFFEAHGTGTPAGDPIEAEAIHTAFFGYKGLSKEIEPLSVGSIKTIIGHTEGTAGLAAVLKASLALQAGVIPPNLLFDKVNPKVKPFYGNLQIQTQAKSWPSLAPGAVRRASVNSFGFGGANAHAILEAYEPSSTPTVGTPANVFTALNVSAMSETALRGTLKKYVEYLKEEPSVDLRSLALTVNTRRSTFPVRTSVFGTSVEELSQRLSERSEAEGKTLTPVAPTSLSSSPKILGVFTGQGAQWKQMGAVLLATSPRVVAILDQLEKSLAELPDGPSWSIKGEILADEDSRVNEAVISQPLCTAVQIVLVDLLQSAGVQFHTVVGHSSGEIGAAYAAGYLSASDAIRIAYYRGLHLYLAQGPNGQQGAMMAVGTSFEDAQELCDLPAFRGRISIAASNSSASVTLSGDLNAIEWAKDVFDDEKKFARLLKVDKAYHSHHMLACSDAYRKSMTDCGITVLQPARNGTTWISSVYGEDALDYRHEMNAEYWISNMVSPVLFSQAIEFAMADQGPFDIGIECGPHPALKGPALQVIQEMLGSSIPYTGLLSRGRPDTQALAEGISYLWQALGADVVNYTSFDRFIAGPDASEPQVLANLPSYAWDHDRAFWHESRQYWANRTKEDPPHEILGTKCPDGTDQQHRWRNMLRPREIPWIAGHQIQEQMVFPAAGYVSAAIEAVQMVTRGQSLGAIEIEDFVIGQAIAFNDEYASVETQFTLTDISVEKDIWSASFFFYSASPKSSRSLDLNASGKLKVTLGEPKDDFLPPHLSPEFNMIDVDSERFYDALKKLGFGYTGPFKALGSLKRRMGVATGTITNPTSTDPAHDLLLHPATFDNAIQSIILAYCYPNDGRLWSVQLPTGIKKIKINPVLCNRYAGKKALLCFKASTSDDRSAEIGGDVDIYDEQGNNALMQLEGLQTKPLANATAANDSPLFLETIWDIESPSREAAVADRPDMQPKTELSFDVERVAFFYLRHLDSVATREEREKAESHHKIFFEYIDHTVANVKSGTAQFAKREWMYDTHDEILDIISKYPDSLDMKLMHAVGEHLLPVIRGETTMLEYMREDNLLNDFYVHAIGFDEYTENLAQQVSQFSHRYPHMNILEIGAGTGGATKRIFSKLGKRFGSYTYTDISAGFFEKTRETFREYEHMMTFKALNIEKDPVEQGFTEQSYDLVVASLVLHATHEMETTMRNVRRLLKPGGYLIMLELGDYIEMRTGLIFGSLPGWWMGYDDGRKLSPCMSEEDWSVCMQKTGFSGVDAIVPRQSELPISLAVLTGQAVDDHVNFLRDPLTPGSIDFVESNLTIIGGTTSKVSAMVEEAAKSLGRFYEKIVTATSLAELDTTEVPFMGSVLFLTDLDEPIFENVTEDALTALKQLFKQSRTCLWVTQGARDDNPFQNMSVGLGRVVKLEMTHLRLQSLDFDVETEPSAPTIMQRLLQFEAMAQWEQSGESKDLLWSVEPEIGYDHGKAIIPRLMPNPVRNARYNSSRRLITKYMEPTSANLSLRWSGKSYDIHEGEPSGATSLVMDGRVQLEVSHSTLDAIGVTATDYAYLVLGKNVKSQQQVIALTPKSDSIVRVFDSWTVPYSMAEDDALRLLPVVYTNLMALSVISRLSSGETLVLVEPEEAFAQTLSRLATERAISVVTLTSRMDVKNSDWIYLHVNSPKRLVRSTVPRNASWVIADRDQGGLAANVLQCLPANCKILATESLTSKQPKLDTFSSMAFIPSILRTAFVRAHDIKATLELPSVVAAADISSDNQPSTEATFFSWTASPSVPVQVTPVDHGTLFSSEKTYWLVGLSGGLGLSLCDWMVKHGAKYIVITSRNPQVDARWEQHMKAQGAVVRVYANDITDRESVSSVCKKIRDELPPVGGIAQGAMVLADTMFVDMDLPRVQKVVGPKVNGSIHLHEMFVEVDLEFFVFFSSMAYVTGNQGQSIYAAANAYMTALAAQRRKRGLAGSAINIGTIIGNGYVTRQLTIAQQEYLTHMGNVFMSEQDFHQIFAEAVVAGRPTSKDIPEIMTGLRLAHLDDSDKVTWFHNPKFSHCVLWPEEQGGKAVMSKQNVTVRAQLLLATTADEAREIIEESLAAKLRSSLQIDATVSVINMNADQLGLDSLVAVDIRSWFIKELNVEMPVLKILGGYTVAEMVAAAQEKLSPSLIPNLGKEVDPSLKAVVKAQVEKPVAAAEEKPIVTEKAEYADFDDENEEEGIPTEDSLPEITVSDESSELSDREPAKFNFNGPGFKKVGFSPGPQTPLSEDDRSKWSSYGSPFDSDSDNASIRKSRTSAATSVTALDEYFSKPDHTIFERTLPMSFGQTRFWFLKFYMEDQTTFNITTSISLAGKLDVGRFSRAVHHLGRRHEALRTAFFTDSNNQPMQAVLKEPVLRLEHARGEANVASEYRRIKNHQYDIGRGETMKITLLSLSEKLHQLIIGYHHINMDGISLEVIIRDLQQLYDGKSLAPVSIQYPDFSIMQYKEHSSGQWDDELTFWKSEFADIPEPLPILPPSTKAVRTPLSIYSSNTVKFEVGAELSSQIENACKRTKTSPFNFYLATFKVLLYRLAEGKATDICIGMADGGRNNDLVSQSVGFFLNLLPLRFKQQSSQMFSDALKEARSKVITALANSKVPFDVLLNEVNAPRTATLSPLFQAFINYRQGVQEKRQFCGCESEATKFDGSQTAYDLSLDILGNPGSGIVYLAGQSSLYSQSDVETIAQSYYALLKAFAKNPALRISRPSLYDPQAVDHALAKGKGPTNVGTWPETLVHRVDEIVKAHGSKVALKSATAKLTYTQMAERVNAIASTLQSNGINKCSRVGVFQDPSTDFFCTILAVLRIGAVFVPLEPRLTAPRLATMVQDSDLNAIVYDKANQKTLAELGSNSKKINVSLVLAKSSAVVSNQATPGATAIILYTSGSTGKPKGILLSHSAWRNQIESSSRAWEVPTGTGVHLQQSSWSFDISISQTFVALANGASLIITPKTMRGDSSAITKTIVSDQVTHVQATPSELSSWLRFGDLAALRASKWQFAMTGGERMTPALIDGFRKLAKNDLKLFNAYGPAETTLAVGSSEVDYMTSDDLDTPFTLFPNYSVYILDGQKQPVPAGIPGEVYIGGAGVAQGYLNQDSLTAKRFLPDTFGTTEYTHFGWTKMHRSGDRGHLSEDGHLVLEGRIDGDTQVKLRGIRIDLQDIESAMVQQANGALTEAVVSVCKLQETEYLVAHVVISPTFTGNTESFLDQLRASLPVPQYMQPAIAVTLDALPVNHSGKVDRKAIAALPILPKATQPGATSQPRDSTEKLKDIWTQVLGQGMTSLHHIDAQSDFFHVGGSSLALVEVQAKIKTIFQVEVSLVQLFENPTLGAMARMVDPTAFSAPVNANLTIPAEVATAISAPTTSINTAPKEIDWEEETALTDDFYDIEIDPTPKDQGLPYKTVVITGATGFLGKALLRRMLDDNHIDKIHAITLRRSRSDLPGIFSDPKVHLHRGDLNAPRLGLSETAAAEIFAETDAVIHNGADVSFMKTYRTLSKTNVGSTRELVKLCLPHRIPIHYISSASVVHLSGLESYGEASVSSFEPPQDGTDGYTASKWASERFLERVSEKFSVPIWIHRPSSITGEDAPTLDLMTNMLSFSKKLRKAPTSPAWQGTLDFVDVEKVATEIVEEVKNDSAHPGGLVKYMYESGDLEIAVDDMKGSLERETGQAFQTLSLEEWTKAAAEEVTNELGICCSK</sequence>
<accession>A0A7L8UVC9</accession>
<dbReference type="EC" id="2.3.1.-" evidence="10"/>
<dbReference type="EC" id="6.3.2.-" evidence="10"/>
<dbReference type="EMBL" id="MT586757">
    <property type="protein sequence ID" value="QOG08944.1"/>
    <property type="molecule type" value="Genomic_DNA"/>
</dbReference>
<dbReference type="SMR" id="A0A7L8UVC9"/>
<dbReference type="GO" id="GO:0004315">
    <property type="term" value="F:3-oxoacyl-[acyl-carrier-protein] synthase activity"/>
    <property type="evidence" value="ECO:0007669"/>
    <property type="project" value="InterPro"/>
</dbReference>
<dbReference type="GO" id="GO:0004312">
    <property type="term" value="F:fatty acid synthase activity"/>
    <property type="evidence" value="ECO:0007669"/>
    <property type="project" value="TreeGrafter"/>
</dbReference>
<dbReference type="GO" id="GO:0016853">
    <property type="term" value="F:isomerase activity"/>
    <property type="evidence" value="ECO:0007669"/>
    <property type="project" value="UniProtKB-KW"/>
</dbReference>
<dbReference type="GO" id="GO:0016874">
    <property type="term" value="F:ligase activity"/>
    <property type="evidence" value="ECO:0007669"/>
    <property type="project" value="UniProtKB-KW"/>
</dbReference>
<dbReference type="GO" id="GO:0008168">
    <property type="term" value="F:methyltransferase activity"/>
    <property type="evidence" value="ECO:0007669"/>
    <property type="project" value="UniProtKB-KW"/>
</dbReference>
<dbReference type="GO" id="GO:0016491">
    <property type="term" value="F:oxidoreductase activity"/>
    <property type="evidence" value="ECO:0007669"/>
    <property type="project" value="UniProtKB-KW"/>
</dbReference>
<dbReference type="GO" id="GO:0031177">
    <property type="term" value="F:phosphopantetheine binding"/>
    <property type="evidence" value="ECO:0007669"/>
    <property type="project" value="InterPro"/>
</dbReference>
<dbReference type="GO" id="GO:0006633">
    <property type="term" value="P:fatty acid biosynthetic process"/>
    <property type="evidence" value="ECO:0007669"/>
    <property type="project" value="InterPro"/>
</dbReference>
<dbReference type="GO" id="GO:0032259">
    <property type="term" value="P:methylation"/>
    <property type="evidence" value="ECO:0007669"/>
    <property type="project" value="UniProtKB-KW"/>
</dbReference>
<dbReference type="GO" id="GO:0009403">
    <property type="term" value="P:toxin biosynthetic process"/>
    <property type="evidence" value="ECO:0007669"/>
    <property type="project" value="UniProtKB-ARBA"/>
</dbReference>
<dbReference type="CDD" id="cd05930">
    <property type="entry name" value="A_NRPS"/>
    <property type="match status" value="1"/>
</dbReference>
<dbReference type="CDD" id="cd02440">
    <property type="entry name" value="AdoMet_MTases"/>
    <property type="match status" value="1"/>
</dbReference>
<dbReference type="CDD" id="cd19532">
    <property type="entry name" value="C_PKS-NRPS"/>
    <property type="match status" value="1"/>
</dbReference>
<dbReference type="CDD" id="cd00833">
    <property type="entry name" value="PKS"/>
    <property type="match status" value="1"/>
</dbReference>
<dbReference type="FunFam" id="3.40.47.10:FF:000019">
    <property type="entry name" value="Polyketide synthase type I"/>
    <property type="match status" value="1"/>
</dbReference>
<dbReference type="Gene3D" id="3.30.300.30">
    <property type="match status" value="1"/>
</dbReference>
<dbReference type="Gene3D" id="3.40.47.10">
    <property type="match status" value="1"/>
</dbReference>
<dbReference type="Gene3D" id="1.10.1200.10">
    <property type="entry name" value="ACP-like"/>
    <property type="match status" value="1"/>
</dbReference>
<dbReference type="Gene3D" id="3.30.559.10">
    <property type="entry name" value="Chloramphenicol acetyltransferase-like domain"/>
    <property type="match status" value="1"/>
</dbReference>
<dbReference type="Gene3D" id="3.40.366.10">
    <property type="entry name" value="Malonyl-Coenzyme A Acyl Carrier Protein, domain 2"/>
    <property type="match status" value="1"/>
</dbReference>
<dbReference type="Gene3D" id="3.40.50.12780">
    <property type="entry name" value="N-terminal domain of ligase-like"/>
    <property type="match status" value="1"/>
</dbReference>
<dbReference type="Gene3D" id="3.40.50.720">
    <property type="entry name" value="NAD(P)-binding Rossmann-like Domain"/>
    <property type="match status" value="3"/>
</dbReference>
<dbReference type="Gene3D" id="3.30.559.30">
    <property type="entry name" value="Nonribosomal peptide synthetase, condensation domain"/>
    <property type="match status" value="1"/>
</dbReference>
<dbReference type="Gene3D" id="3.10.129.110">
    <property type="entry name" value="Polyketide synthase dehydratase"/>
    <property type="match status" value="1"/>
</dbReference>
<dbReference type="Gene3D" id="3.40.50.150">
    <property type="entry name" value="Vaccinia Virus protein VP39"/>
    <property type="match status" value="1"/>
</dbReference>
<dbReference type="InterPro" id="IPR001227">
    <property type="entry name" value="Ac_transferase_dom_sf"/>
</dbReference>
<dbReference type="InterPro" id="IPR036736">
    <property type="entry name" value="ACP-like_sf"/>
</dbReference>
<dbReference type="InterPro" id="IPR014043">
    <property type="entry name" value="Acyl_transferase_dom"/>
</dbReference>
<dbReference type="InterPro" id="IPR016035">
    <property type="entry name" value="Acyl_Trfase/lysoPLipase"/>
</dbReference>
<dbReference type="InterPro" id="IPR045851">
    <property type="entry name" value="AMP-bd_C_sf"/>
</dbReference>
<dbReference type="InterPro" id="IPR020845">
    <property type="entry name" value="AMP-binding_CS"/>
</dbReference>
<dbReference type="InterPro" id="IPR000873">
    <property type="entry name" value="AMP-dep_synth/lig_dom"/>
</dbReference>
<dbReference type="InterPro" id="IPR042099">
    <property type="entry name" value="ANL_N_sf"/>
</dbReference>
<dbReference type="InterPro" id="IPR023213">
    <property type="entry name" value="CAT-like_dom_sf"/>
</dbReference>
<dbReference type="InterPro" id="IPR001242">
    <property type="entry name" value="Condensatn"/>
</dbReference>
<dbReference type="InterPro" id="IPR013120">
    <property type="entry name" value="Far_NAD-bd"/>
</dbReference>
<dbReference type="InterPro" id="IPR018201">
    <property type="entry name" value="Ketoacyl_synth_AS"/>
</dbReference>
<dbReference type="InterPro" id="IPR014031">
    <property type="entry name" value="Ketoacyl_synth_C"/>
</dbReference>
<dbReference type="InterPro" id="IPR014030">
    <property type="entry name" value="Ketoacyl_synth_N"/>
</dbReference>
<dbReference type="InterPro" id="IPR016036">
    <property type="entry name" value="Malonyl_transacylase_ACP-bd"/>
</dbReference>
<dbReference type="InterPro" id="IPR013217">
    <property type="entry name" value="Methyltransf_12"/>
</dbReference>
<dbReference type="InterPro" id="IPR036291">
    <property type="entry name" value="NAD(P)-bd_dom_sf"/>
</dbReference>
<dbReference type="InterPro" id="IPR032821">
    <property type="entry name" value="PKS_assoc"/>
</dbReference>
<dbReference type="InterPro" id="IPR020841">
    <property type="entry name" value="PKS_Beta-ketoAc_synthase_dom"/>
</dbReference>
<dbReference type="InterPro" id="IPR042104">
    <property type="entry name" value="PKS_dehydratase_sf"/>
</dbReference>
<dbReference type="InterPro" id="IPR020807">
    <property type="entry name" value="PKS_DH"/>
</dbReference>
<dbReference type="InterPro" id="IPR049551">
    <property type="entry name" value="PKS_DH_C"/>
</dbReference>
<dbReference type="InterPro" id="IPR049552">
    <property type="entry name" value="PKS_DH_N"/>
</dbReference>
<dbReference type="InterPro" id="IPR013968">
    <property type="entry name" value="PKS_KR"/>
</dbReference>
<dbReference type="InterPro" id="IPR049900">
    <property type="entry name" value="PKS_mFAS_DH"/>
</dbReference>
<dbReference type="InterPro" id="IPR050091">
    <property type="entry name" value="PKS_NRPS_Biosynth_Enz"/>
</dbReference>
<dbReference type="InterPro" id="IPR020806">
    <property type="entry name" value="PKS_PP-bd"/>
</dbReference>
<dbReference type="InterPro" id="IPR009081">
    <property type="entry name" value="PP-bd_ACP"/>
</dbReference>
<dbReference type="InterPro" id="IPR006162">
    <property type="entry name" value="Ppantetheine_attach_site"/>
</dbReference>
<dbReference type="InterPro" id="IPR029063">
    <property type="entry name" value="SAM-dependent_MTases_sf"/>
</dbReference>
<dbReference type="InterPro" id="IPR016039">
    <property type="entry name" value="Thiolase-like"/>
</dbReference>
<dbReference type="PANTHER" id="PTHR43775">
    <property type="entry name" value="FATTY ACID SYNTHASE"/>
    <property type="match status" value="1"/>
</dbReference>
<dbReference type="PANTHER" id="PTHR43775:SF37">
    <property type="entry name" value="SI:DKEY-61P9.11"/>
    <property type="match status" value="1"/>
</dbReference>
<dbReference type="Pfam" id="PF00698">
    <property type="entry name" value="Acyl_transf_1"/>
    <property type="match status" value="1"/>
</dbReference>
<dbReference type="Pfam" id="PF00501">
    <property type="entry name" value="AMP-binding"/>
    <property type="match status" value="1"/>
</dbReference>
<dbReference type="Pfam" id="PF00668">
    <property type="entry name" value="Condensation"/>
    <property type="match status" value="1"/>
</dbReference>
<dbReference type="Pfam" id="PF16197">
    <property type="entry name" value="KAsynt_C_assoc"/>
    <property type="match status" value="1"/>
</dbReference>
<dbReference type="Pfam" id="PF00109">
    <property type="entry name" value="ketoacyl-synt"/>
    <property type="match status" value="1"/>
</dbReference>
<dbReference type="Pfam" id="PF02801">
    <property type="entry name" value="Ketoacyl-synt_C"/>
    <property type="match status" value="1"/>
</dbReference>
<dbReference type="Pfam" id="PF08659">
    <property type="entry name" value="KR"/>
    <property type="match status" value="1"/>
</dbReference>
<dbReference type="Pfam" id="PF08242">
    <property type="entry name" value="Methyltransf_12"/>
    <property type="match status" value="1"/>
</dbReference>
<dbReference type="Pfam" id="PF07993">
    <property type="entry name" value="NAD_binding_4"/>
    <property type="match status" value="1"/>
</dbReference>
<dbReference type="Pfam" id="PF21089">
    <property type="entry name" value="PKS_DH_N"/>
    <property type="match status" value="1"/>
</dbReference>
<dbReference type="Pfam" id="PF00550">
    <property type="entry name" value="PP-binding"/>
    <property type="match status" value="1"/>
</dbReference>
<dbReference type="Pfam" id="PF14765">
    <property type="entry name" value="PS-DH"/>
    <property type="match status" value="1"/>
</dbReference>
<dbReference type="SMART" id="SM00827">
    <property type="entry name" value="PKS_AT"/>
    <property type="match status" value="1"/>
</dbReference>
<dbReference type="SMART" id="SM00826">
    <property type="entry name" value="PKS_DH"/>
    <property type="match status" value="1"/>
</dbReference>
<dbReference type="SMART" id="SM00822">
    <property type="entry name" value="PKS_KR"/>
    <property type="match status" value="1"/>
</dbReference>
<dbReference type="SMART" id="SM00825">
    <property type="entry name" value="PKS_KS"/>
    <property type="match status" value="1"/>
</dbReference>
<dbReference type="SMART" id="SM00823">
    <property type="entry name" value="PKS_PP"/>
    <property type="match status" value="2"/>
</dbReference>
<dbReference type="SUPFAM" id="SSF56801">
    <property type="entry name" value="Acetyl-CoA synthetase-like"/>
    <property type="match status" value="1"/>
</dbReference>
<dbReference type="SUPFAM" id="SSF47336">
    <property type="entry name" value="ACP-like"/>
    <property type="match status" value="2"/>
</dbReference>
<dbReference type="SUPFAM" id="SSF52777">
    <property type="entry name" value="CoA-dependent acyltransferases"/>
    <property type="match status" value="2"/>
</dbReference>
<dbReference type="SUPFAM" id="SSF52151">
    <property type="entry name" value="FabD/lysophospholipase-like"/>
    <property type="match status" value="1"/>
</dbReference>
<dbReference type="SUPFAM" id="SSF51735">
    <property type="entry name" value="NAD(P)-binding Rossmann-fold domains"/>
    <property type="match status" value="2"/>
</dbReference>
<dbReference type="SUPFAM" id="SSF55048">
    <property type="entry name" value="Probable ACP-binding domain of malonyl-CoA ACP transacylase"/>
    <property type="match status" value="1"/>
</dbReference>
<dbReference type="SUPFAM" id="SSF53335">
    <property type="entry name" value="S-adenosyl-L-methionine-dependent methyltransferases"/>
    <property type="match status" value="1"/>
</dbReference>
<dbReference type="SUPFAM" id="SSF53901">
    <property type="entry name" value="Thiolase-like"/>
    <property type="match status" value="1"/>
</dbReference>
<dbReference type="PROSITE" id="PS00455">
    <property type="entry name" value="AMP_BINDING"/>
    <property type="match status" value="1"/>
</dbReference>
<dbReference type="PROSITE" id="PS50075">
    <property type="entry name" value="CARRIER"/>
    <property type="match status" value="2"/>
</dbReference>
<dbReference type="PROSITE" id="PS00606">
    <property type="entry name" value="KS3_1"/>
    <property type="match status" value="1"/>
</dbReference>
<dbReference type="PROSITE" id="PS52004">
    <property type="entry name" value="KS3_2"/>
    <property type="match status" value="1"/>
</dbReference>
<dbReference type="PROSITE" id="PS00012">
    <property type="entry name" value="PHOSPHOPANTETHEINE"/>
    <property type="match status" value="1"/>
</dbReference>
<dbReference type="PROSITE" id="PS52019">
    <property type="entry name" value="PKS_MFAS_DH"/>
    <property type="match status" value="1"/>
</dbReference>
<feature type="chain" id="PRO_0000454524" description="Polyketide synthase-nonribosomal peptide synthetase ffsA">
    <location>
        <begin position="1"/>
        <end position="4042"/>
    </location>
</feature>
<feature type="domain" description="Ketosynthase family 3 (KS3)" evidence="4 10">
    <location>
        <begin position="17"/>
        <end position="453"/>
    </location>
</feature>
<feature type="domain" description="PKS/mFAS DH" evidence="5">
    <location>
        <begin position="950"/>
        <end position="1251"/>
    </location>
</feature>
<feature type="domain" description="Carrier 1" evidence="3">
    <location>
        <begin position="2399"/>
        <end position="2476"/>
    </location>
</feature>
<feature type="domain" description="Carrier 2" evidence="3">
    <location>
        <begin position="3607"/>
        <end position="3684"/>
    </location>
</feature>
<feature type="region of interest" description="Malonyl-CoA:ACP transacylase (MAT) domain" evidence="2 10">
    <location>
        <begin position="561"/>
        <end position="878"/>
    </location>
</feature>
<feature type="region of interest" description="Dehydratase (DH) domain" evidence="2 10">
    <location>
        <begin position="950"/>
        <end position="1249"/>
    </location>
</feature>
<feature type="region of interest" description="N-terminal hotdog fold" evidence="5">
    <location>
        <begin position="950"/>
        <end position="1083"/>
    </location>
</feature>
<feature type="region of interest" description="C-terminal hotdog fold" evidence="5">
    <location>
        <begin position="1098"/>
        <end position="1251"/>
    </location>
</feature>
<feature type="region of interest" description="Methyltransferase (MT) domain" evidence="2 10">
    <location>
        <begin position="1390"/>
        <end position="1613"/>
    </location>
</feature>
<feature type="region of interest" description="Ketoreductase (KR)domain" evidence="2 10">
    <location>
        <begin position="2116"/>
        <end position="2289"/>
    </location>
</feature>
<feature type="region of interest" description="Disordered" evidence="6">
    <location>
        <begin position="2515"/>
        <end position="2601"/>
    </location>
</feature>
<feature type="region of interest" description="Condensation" evidence="2 10">
    <location>
        <begin position="2629"/>
        <end position="3061"/>
    </location>
</feature>
<feature type="region of interest" description="Adenylation" evidence="2 10">
    <location>
        <begin position="3089"/>
        <end position="3486"/>
    </location>
</feature>
<feature type="region of interest" description="Reductase-like domain" evidence="2 10">
    <location>
        <begin position="3750"/>
        <end position="3971"/>
    </location>
</feature>
<feature type="compositionally biased region" description="Acidic residues" evidence="6">
    <location>
        <begin position="2520"/>
        <end position="2532"/>
    </location>
</feature>
<feature type="active site" description="For beta-ketoacyl synthase activity" evidence="4">
    <location>
        <position position="190"/>
    </location>
</feature>
<feature type="active site" description="For beta-ketoacyl synthase activity" evidence="4">
    <location>
        <position position="330"/>
    </location>
</feature>
<feature type="active site" description="For beta-ketoacyl synthase activity" evidence="4">
    <location>
        <position position="373"/>
    </location>
</feature>
<feature type="active site" description="Proton acceptor; for dehydratase activity" evidence="5">
    <location>
        <position position="982"/>
    </location>
</feature>
<feature type="active site" description="Proton donor; for dehydratase activity" evidence="5">
    <location>
        <position position="1158"/>
    </location>
</feature>
<feature type="modified residue" description="O-(pantetheine 4'-phosphoryl)serine" evidence="3">
    <location>
        <position position="2436"/>
    </location>
</feature>
<feature type="modified residue" description="O-(pantetheine 4'-phosphoryl)serine" evidence="3">
    <location>
        <position position="3644"/>
    </location>
</feature>
<protein>
    <recommendedName>
        <fullName evidence="8">Polyketide synthase-nonribosomal peptide synthetase ffsA</fullName>
        <shortName evidence="8">PKS-NRPS ffsA</shortName>
        <ecNumber evidence="10">2.3.1.-</ecNumber>
        <ecNumber evidence="10">6.3.2.-</ecNumber>
    </recommendedName>
    <alternativeName>
        <fullName evidence="8">Cytochalasans biosynthesis cluster protein ffsA</fullName>
    </alternativeName>
</protein>
<proteinExistence type="inferred from homology"/>